<name>RL34_WOLPM</name>
<organism>
    <name type="scientific">Wolbachia pipientis wMel</name>
    <dbReference type="NCBI Taxonomy" id="163164"/>
    <lineage>
        <taxon>Bacteria</taxon>
        <taxon>Pseudomonadati</taxon>
        <taxon>Pseudomonadota</taxon>
        <taxon>Alphaproteobacteria</taxon>
        <taxon>Rickettsiales</taxon>
        <taxon>Anaplasmataceae</taxon>
        <taxon>Wolbachieae</taxon>
        <taxon>Wolbachia</taxon>
    </lineage>
</organism>
<gene>
    <name evidence="1" type="primary">rpmH</name>
    <name type="ordered locus">WD_0201</name>
</gene>
<evidence type="ECO:0000255" key="1">
    <source>
        <dbReference type="HAMAP-Rule" id="MF_00391"/>
    </source>
</evidence>
<evidence type="ECO:0000305" key="2"/>
<reference key="1">
    <citation type="journal article" date="2004" name="PLoS Biol.">
        <title>Phylogenomics of the reproductive parasite Wolbachia pipientis wMel: a streamlined genome overrun by mobile genetic elements.</title>
        <authorList>
            <person name="Wu M."/>
            <person name="Sun L.V."/>
            <person name="Vamathevan J.J."/>
            <person name="Riegler M."/>
            <person name="DeBoy R.T."/>
            <person name="Brownlie J.C."/>
            <person name="McGraw E.A."/>
            <person name="Martin W."/>
            <person name="Esser C."/>
            <person name="Ahmadinejad N."/>
            <person name="Wiegand C."/>
            <person name="Madupu R."/>
            <person name="Beanan M.J."/>
            <person name="Brinkac L.M."/>
            <person name="Daugherty S.C."/>
            <person name="Durkin A.S."/>
            <person name="Kolonay J.F."/>
            <person name="Nelson W.C."/>
            <person name="Mohamoud Y."/>
            <person name="Lee P."/>
            <person name="Berry K.J."/>
            <person name="Young M.B."/>
            <person name="Utterback T.R."/>
            <person name="Weidman J.F."/>
            <person name="Nierman W.C."/>
            <person name="Paulsen I.T."/>
            <person name="Nelson K.E."/>
            <person name="Tettelin H."/>
            <person name="O'Neill S.L."/>
            <person name="Eisen J.A."/>
        </authorList>
    </citation>
    <scope>NUCLEOTIDE SEQUENCE [LARGE SCALE GENOMIC DNA]</scope>
</reference>
<accession>Q73IG5</accession>
<keyword id="KW-0687">Ribonucleoprotein</keyword>
<keyword id="KW-0689">Ribosomal protein</keyword>
<proteinExistence type="inferred from homology"/>
<comment type="similarity">
    <text evidence="1">Belongs to the bacterial ribosomal protein bL34 family.</text>
</comment>
<dbReference type="EMBL" id="AE017196">
    <property type="protein sequence ID" value="AAS13947.1"/>
    <property type="molecule type" value="Genomic_DNA"/>
</dbReference>
<dbReference type="RefSeq" id="WP_006279898.1">
    <property type="nucleotide sequence ID" value="NZ_OX384529.1"/>
</dbReference>
<dbReference type="SMR" id="Q73IG5"/>
<dbReference type="EnsemblBacteria" id="AAS13947">
    <property type="protein sequence ID" value="AAS13947"/>
    <property type="gene ID" value="WD_0201"/>
</dbReference>
<dbReference type="GeneID" id="70035690"/>
<dbReference type="KEGG" id="wol:WD_0201"/>
<dbReference type="eggNOG" id="COG0230">
    <property type="taxonomic scope" value="Bacteria"/>
</dbReference>
<dbReference type="Proteomes" id="UP000008215">
    <property type="component" value="Chromosome"/>
</dbReference>
<dbReference type="GO" id="GO:1990904">
    <property type="term" value="C:ribonucleoprotein complex"/>
    <property type="evidence" value="ECO:0007669"/>
    <property type="project" value="UniProtKB-KW"/>
</dbReference>
<dbReference type="GO" id="GO:0005840">
    <property type="term" value="C:ribosome"/>
    <property type="evidence" value="ECO:0007669"/>
    <property type="project" value="UniProtKB-KW"/>
</dbReference>
<dbReference type="GO" id="GO:0003735">
    <property type="term" value="F:structural constituent of ribosome"/>
    <property type="evidence" value="ECO:0007669"/>
    <property type="project" value="InterPro"/>
</dbReference>
<dbReference type="GO" id="GO:0006412">
    <property type="term" value="P:translation"/>
    <property type="evidence" value="ECO:0007669"/>
    <property type="project" value="UniProtKB-UniRule"/>
</dbReference>
<dbReference type="FunFam" id="1.10.287.3980:FF:000001">
    <property type="entry name" value="Mitochondrial ribosomal protein L34"/>
    <property type="match status" value="1"/>
</dbReference>
<dbReference type="Gene3D" id="1.10.287.3980">
    <property type="match status" value="1"/>
</dbReference>
<dbReference type="HAMAP" id="MF_00391">
    <property type="entry name" value="Ribosomal_bL34"/>
    <property type="match status" value="1"/>
</dbReference>
<dbReference type="InterPro" id="IPR000271">
    <property type="entry name" value="Ribosomal_bL34"/>
</dbReference>
<dbReference type="InterPro" id="IPR020939">
    <property type="entry name" value="Ribosomal_bL34_CS"/>
</dbReference>
<dbReference type="NCBIfam" id="TIGR01030">
    <property type="entry name" value="rpmH_bact"/>
    <property type="match status" value="1"/>
</dbReference>
<dbReference type="PANTHER" id="PTHR14503:SF4">
    <property type="entry name" value="LARGE RIBOSOMAL SUBUNIT PROTEIN BL34M"/>
    <property type="match status" value="1"/>
</dbReference>
<dbReference type="PANTHER" id="PTHR14503">
    <property type="entry name" value="MITOCHONDRIAL RIBOSOMAL PROTEIN 34 FAMILY MEMBER"/>
    <property type="match status" value="1"/>
</dbReference>
<dbReference type="Pfam" id="PF00468">
    <property type="entry name" value="Ribosomal_L34"/>
    <property type="match status" value="1"/>
</dbReference>
<dbReference type="PROSITE" id="PS00784">
    <property type="entry name" value="RIBOSOMAL_L34"/>
    <property type="match status" value="1"/>
</dbReference>
<protein>
    <recommendedName>
        <fullName evidence="1">Large ribosomal subunit protein bL34</fullName>
    </recommendedName>
    <alternativeName>
        <fullName evidence="2">50S ribosomal protein L34</fullName>
    </alternativeName>
</protein>
<sequence>MKRTFQPKNLIRKRRHGFRSRMATRAGRKILNRRRSLGCNKLCA</sequence>
<feature type="chain" id="PRO_0000187505" description="Large ribosomal subunit protein bL34">
    <location>
        <begin position="1"/>
        <end position="44"/>
    </location>
</feature>